<sequence>VGFKAGVKDYKLTYYTPDYETLDTDILAAFRVTPQPGVPPEEAGAAVAAESSTGTWTTVWTDGLTSLDRYKGRCYHIEPVAGEENQYIAYVAYPLDLFEEGSVTNMFTSIVGNVFGFKALRALRLEDLRIPPAYSKTFQGPPHGIQVERDKLNKYGRPLLGCTIKPKLGLSAKNYGRAVYECLRGGLDFTKDDENVNSQPFMRWRDRFVFFAEALYKAQAETGEIKGHYLNATAGTCEEMIKRAVFARELGVPIVMHDYLTGGFTANTSLAHYCRDNGLLLHIHRAMHAVIDRQKNHGIHFRVLAKALRLSGGDHIHAGTVVGKLEGERDITLGFVDLLRDDYVEKDRSRGIYFTQFWVSIPGVLPVASGGIHVWHMPALTEIFGDDSVLQFGGGTLGHPWGNAPGAVANRVALEACVQARNEGRDLAREGNEIIREASKWSTELAAACEIWKEIKFVFEAMDTL</sequence>
<protein>
    <recommendedName>
        <fullName evidence="1">Ribulose bisphosphate carboxylase large chain</fullName>
        <shortName evidence="1">RuBisCO large subunit</shortName>
        <ecNumber evidence="1">4.1.1.39</ecNumber>
    </recommendedName>
</protein>
<geneLocation type="chloroplast"/>
<dbReference type="EC" id="4.1.1.39" evidence="1"/>
<dbReference type="EMBL" id="L01936">
    <property type="protein sequence ID" value="AAA84502.2"/>
    <property type="molecule type" value="Genomic_DNA"/>
</dbReference>
<dbReference type="SMR" id="P28434"/>
<dbReference type="GO" id="GO:0009507">
    <property type="term" value="C:chloroplast"/>
    <property type="evidence" value="ECO:0007669"/>
    <property type="project" value="UniProtKB-SubCell"/>
</dbReference>
<dbReference type="GO" id="GO:0000287">
    <property type="term" value="F:magnesium ion binding"/>
    <property type="evidence" value="ECO:0007669"/>
    <property type="project" value="InterPro"/>
</dbReference>
<dbReference type="GO" id="GO:0004497">
    <property type="term" value="F:monooxygenase activity"/>
    <property type="evidence" value="ECO:0007669"/>
    <property type="project" value="UniProtKB-KW"/>
</dbReference>
<dbReference type="GO" id="GO:0016984">
    <property type="term" value="F:ribulose-bisphosphate carboxylase activity"/>
    <property type="evidence" value="ECO:0007669"/>
    <property type="project" value="UniProtKB-EC"/>
</dbReference>
<dbReference type="GO" id="GO:0009853">
    <property type="term" value="P:photorespiration"/>
    <property type="evidence" value="ECO:0007669"/>
    <property type="project" value="UniProtKB-KW"/>
</dbReference>
<dbReference type="GO" id="GO:0019253">
    <property type="term" value="P:reductive pentose-phosphate cycle"/>
    <property type="evidence" value="ECO:0007669"/>
    <property type="project" value="UniProtKB-KW"/>
</dbReference>
<dbReference type="CDD" id="cd08212">
    <property type="entry name" value="RuBisCO_large_I"/>
    <property type="match status" value="1"/>
</dbReference>
<dbReference type="FunFam" id="3.20.20.110:FF:000001">
    <property type="entry name" value="Ribulose bisphosphate carboxylase large chain"/>
    <property type="match status" value="1"/>
</dbReference>
<dbReference type="FunFam" id="3.30.70.150:FF:000001">
    <property type="entry name" value="Ribulose bisphosphate carboxylase large chain"/>
    <property type="match status" value="1"/>
</dbReference>
<dbReference type="Gene3D" id="3.20.20.110">
    <property type="entry name" value="Ribulose bisphosphate carboxylase, large subunit, C-terminal domain"/>
    <property type="match status" value="1"/>
</dbReference>
<dbReference type="Gene3D" id="3.30.70.150">
    <property type="entry name" value="RuBisCO large subunit, N-terminal domain"/>
    <property type="match status" value="1"/>
</dbReference>
<dbReference type="HAMAP" id="MF_01338">
    <property type="entry name" value="RuBisCO_L_type1"/>
    <property type="match status" value="1"/>
</dbReference>
<dbReference type="InterPro" id="IPR033966">
    <property type="entry name" value="RuBisCO"/>
</dbReference>
<dbReference type="InterPro" id="IPR020878">
    <property type="entry name" value="RuBisCo_large_chain_AS"/>
</dbReference>
<dbReference type="InterPro" id="IPR000685">
    <property type="entry name" value="RuBisCO_lsu_C"/>
</dbReference>
<dbReference type="InterPro" id="IPR036376">
    <property type="entry name" value="RuBisCO_lsu_C_sf"/>
</dbReference>
<dbReference type="InterPro" id="IPR017443">
    <property type="entry name" value="RuBisCO_lsu_fd_N"/>
</dbReference>
<dbReference type="InterPro" id="IPR036422">
    <property type="entry name" value="RuBisCO_lsu_N_sf"/>
</dbReference>
<dbReference type="InterPro" id="IPR020888">
    <property type="entry name" value="RuBisCO_lsuI"/>
</dbReference>
<dbReference type="NCBIfam" id="NF003252">
    <property type="entry name" value="PRK04208.1"/>
    <property type="match status" value="1"/>
</dbReference>
<dbReference type="PANTHER" id="PTHR42704">
    <property type="entry name" value="RIBULOSE BISPHOSPHATE CARBOXYLASE"/>
    <property type="match status" value="1"/>
</dbReference>
<dbReference type="PANTHER" id="PTHR42704:SF15">
    <property type="entry name" value="RIBULOSE BISPHOSPHATE CARBOXYLASE LARGE CHAIN"/>
    <property type="match status" value="1"/>
</dbReference>
<dbReference type="Pfam" id="PF00016">
    <property type="entry name" value="RuBisCO_large"/>
    <property type="match status" value="1"/>
</dbReference>
<dbReference type="Pfam" id="PF02788">
    <property type="entry name" value="RuBisCO_large_N"/>
    <property type="match status" value="1"/>
</dbReference>
<dbReference type="SFLD" id="SFLDG01052">
    <property type="entry name" value="RuBisCO"/>
    <property type="match status" value="1"/>
</dbReference>
<dbReference type="SFLD" id="SFLDS00014">
    <property type="entry name" value="RuBisCO"/>
    <property type="match status" value="1"/>
</dbReference>
<dbReference type="SFLD" id="SFLDG00301">
    <property type="entry name" value="RuBisCO-like_proteins"/>
    <property type="match status" value="1"/>
</dbReference>
<dbReference type="SUPFAM" id="SSF51649">
    <property type="entry name" value="RuBisCo, C-terminal domain"/>
    <property type="match status" value="1"/>
</dbReference>
<dbReference type="SUPFAM" id="SSF54966">
    <property type="entry name" value="RuBisCO, large subunit, small (N-terminal) domain"/>
    <property type="match status" value="1"/>
</dbReference>
<dbReference type="PROSITE" id="PS00157">
    <property type="entry name" value="RUBISCO_LARGE"/>
    <property type="match status" value="1"/>
</dbReference>
<evidence type="ECO:0000255" key="1">
    <source>
        <dbReference type="HAMAP-Rule" id="MF_01338"/>
    </source>
</evidence>
<reference key="1">
    <citation type="journal article" date="1992" name="Science">
        <title>Carnivorous plants: phylogeny and structural evolution.</title>
        <authorList>
            <person name="Albert V.A."/>
            <person name="Williams S.E."/>
            <person name="Chase M.W."/>
        </authorList>
    </citation>
    <scope>NUCLEOTIDE SEQUENCE [GENOMIC DNA]</scope>
</reference>
<name>RBL_NEPAL</name>
<feature type="chain" id="PRO_0000062539" description="Ribulose bisphosphate carboxylase large chain">
    <location>
        <begin position="1" status="less than"/>
        <end position="465"/>
    </location>
</feature>
<feature type="active site" description="Proton acceptor" evidence="1">
    <location>
        <position position="165"/>
    </location>
</feature>
<feature type="active site" description="Proton acceptor" evidence="1">
    <location>
        <position position="284"/>
    </location>
</feature>
<feature type="binding site" description="in homodimeric partner" evidence="1">
    <location>
        <position position="113"/>
    </location>
    <ligand>
        <name>substrate</name>
    </ligand>
</feature>
<feature type="binding site" evidence="1">
    <location>
        <position position="163"/>
    </location>
    <ligand>
        <name>substrate</name>
    </ligand>
</feature>
<feature type="binding site" evidence="1">
    <location>
        <position position="167"/>
    </location>
    <ligand>
        <name>substrate</name>
    </ligand>
</feature>
<feature type="binding site" description="via carbamate group" evidence="1">
    <location>
        <position position="191"/>
    </location>
    <ligand>
        <name>Mg(2+)</name>
        <dbReference type="ChEBI" id="CHEBI:18420"/>
    </ligand>
</feature>
<feature type="binding site" evidence="1">
    <location>
        <position position="193"/>
    </location>
    <ligand>
        <name>Mg(2+)</name>
        <dbReference type="ChEBI" id="CHEBI:18420"/>
    </ligand>
</feature>
<feature type="binding site" evidence="1">
    <location>
        <position position="194"/>
    </location>
    <ligand>
        <name>Mg(2+)</name>
        <dbReference type="ChEBI" id="CHEBI:18420"/>
    </ligand>
</feature>
<feature type="binding site" evidence="1">
    <location>
        <position position="285"/>
    </location>
    <ligand>
        <name>substrate</name>
    </ligand>
</feature>
<feature type="binding site" evidence="1">
    <location>
        <position position="317"/>
    </location>
    <ligand>
        <name>substrate</name>
    </ligand>
</feature>
<feature type="binding site" evidence="1">
    <location>
        <position position="369"/>
    </location>
    <ligand>
        <name>substrate</name>
    </ligand>
</feature>
<feature type="site" description="Transition state stabilizer" evidence="1">
    <location>
        <position position="324"/>
    </location>
</feature>
<feature type="modified residue" description="N6,N6,N6-trimethyllysine" evidence="1">
    <location>
        <position position="4"/>
    </location>
</feature>
<feature type="modified residue" description="N6-carboxylysine" evidence="1">
    <location>
        <position position="191"/>
    </location>
</feature>
<feature type="disulfide bond" description="Interchain; in linked form" evidence="1">
    <location>
        <position position="237"/>
    </location>
</feature>
<feature type="non-terminal residue">
    <location>
        <position position="1"/>
    </location>
</feature>
<organism>
    <name type="scientific">Nepenthes alata</name>
    <name type="common">Winged pitcher plant</name>
    <name type="synonym">Nepenthes copelandii</name>
    <dbReference type="NCBI Taxonomy" id="4376"/>
    <lineage>
        <taxon>Eukaryota</taxon>
        <taxon>Viridiplantae</taxon>
        <taxon>Streptophyta</taxon>
        <taxon>Embryophyta</taxon>
        <taxon>Tracheophyta</taxon>
        <taxon>Spermatophyta</taxon>
        <taxon>Magnoliopsida</taxon>
        <taxon>eudicotyledons</taxon>
        <taxon>Gunneridae</taxon>
        <taxon>Pentapetalae</taxon>
        <taxon>Caryophyllales</taxon>
        <taxon>Nepenthaceae</taxon>
        <taxon>Nepenthes</taxon>
    </lineage>
</organism>
<gene>
    <name evidence="1" type="primary">rbcL</name>
</gene>
<comment type="function">
    <text evidence="1">RuBisCO catalyzes two reactions: the carboxylation of D-ribulose 1,5-bisphosphate, the primary event in carbon dioxide fixation, as well as the oxidative fragmentation of the pentose substrate in the photorespiration process. Both reactions occur simultaneously and in competition at the same active site.</text>
</comment>
<comment type="catalytic activity">
    <reaction evidence="1">
        <text>2 (2R)-3-phosphoglycerate + 2 H(+) = D-ribulose 1,5-bisphosphate + CO2 + H2O</text>
        <dbReference type="Rhea" id="RHEA:23124"/>
        <dbReference type="ChEBI" id="CHEBI:15377"/>
        <dbReference type="ChEBI" id="CHEBI:15378"/>
        <dbReference type="ChEBI" id="CHEBI:16526"/>
        <dbReference type="ChEBI" id="CHEBI:57870"/>
        <dbReference type="ChEBI" id="CHEBI:58272"/>
        <dbReference type="EC" id="4.1.1.39"/>
    </reaction>
</comment>
<comment type="catalytic activity">
    <reaction evidence="1">
        <text>D-ribulose 1,5-bisphosphate + O2 = 2-phosphoglycolate + (2R)-3-phosphoglycerate + 2 H(+)</text>
        <dbReference type="Rhea" id="RHEA:36631"/>
        <dbReference type="ChEBI" id="CHEBI:15378"/>
        <dbReference type="ChEBI" id="CHEBI:15379"/>
        <dbReference type="ChEBI" id="CHEBI:57870"/>
        <dbReference type="ChEBI" id="CHEBI:58033"/>
        <dbReference type="ChEBI" id="CHEBI:58272"/>
    </reaction>
</comment>
<comment type="cofactor">
    <cofactor evidence="1">
        <name>Mg(2+)</name>
        <dbReference type="ChEBI" id="CHEBI:18420"/>
    </cofactor>
    <text evidence="1">Binds 1 Mg(2+) ion per subunit.</text>
</comment>
<comment type="subunit">
    <text evidence="1">Heterohexadecamer of 8 large chains and 8 small chains; disulfide-linked. The disulfide link is formed within the large subunit homodimers.</text>
</comment>
<comment type="subcellular location">
    <subcellularLocation>
        <location>Plastid</location>
        <location>Chloroplast</location>
    </subcellularLocation>
</comment>
<comment type="PTM">
    <text evidence="1">The disulfide bond which can form in the large chain dimeric partners within the hexadecamer appears to be associated with oxidative stress and protein turnover.</text>
</comment>
<comment type="miscellaneous">
    <text evidence="1">The basic functional RuBisCO is composed of a large chain homodimer in a 'head-to-tail' conformation. In form I RuBisCO this homodimer is arranged in a barrel-like tetramer with the small subunits forming a tetrameric 'cap' on each end of the 'barrel'.</text>
</comment>
<comment type="similarity">
    <text evidence="1">Belongs to the RuBisCO large chain family. Type I subfamily.</text>
</comment>
<proteinExistence type="inferred from homology"/>
<keyword id="KW-0113">Calvin cycle</keyword>
<keyword id="KW-0120">Carbon dioxide fixation</keyword>
<keyword id="KW-0150">Chloroplast</keyword>
<keyword id="KW-1015">Disulfide bond</keyword>
<keyword id="KW-0456">Lyase</keyword>
<keyword id="KW-0460">Magnesium</keyword>
<keyword id="KW-0479">Metal-binding</keyword>
<keyword id="KW-0488">Methylation</keyword>
<keyword id="KW-0503">Monooxygenase</keyword>
<keyword id="KW-0560">Oxidoreductase</keyword>
<keyword id="KW-0601">Photorespiration</keyword>
<keyword id="KW-0602">Photosynthesis</keyword>
<keyword id="KW-0934">Plastid</keyword>
<accession>P28434</accession>